<gene>
    <name evidence="1" type="primary">rimK</name>
    <name type="ordered locus">Csal_1240</name>
</gene>
<name>RIMK_CHRSD</name>
<reference key="1">
    <citation type="journal article" date="2011" name="Stand. Genomic Sci.">
        <title>Complete genome sequence of the halophilic and highly halotolerant Chromohalobacter salexigens type strain (1H11(T)).</title>
        <authorList>
            <person name="Copeland A."/>
            <person name="O'Connor K."/>
            <person name="Lucas S."/>
            <person name="Lapidus A."/>
            <person name="Berry K.W."/>
            <person name="Detter J.C."/>
            <person name="Del Rio T.G."/>
            <person name="Hammon N."/>
            <person name="Dalin E."/>
            <person name="Tice H."/>
            <person name="Pitluck S."/>
            <person name="Bruce D."/>
            <person name="Goodwin L."/>
            <person name="Han C."/>
            <person name="Tapia R."/>
            <person name="Saunders E."/>
            <person name="Schmutz J."/>
            <person name="Brettin T."/>
            <person name="Larimer F."/>
            <person name="Land M."/>
            <person name="Hauser L."/>
            <person name="Vargas C."/>
            <person name="Nieto J.J."/>
            <person name="Kyrpides N.C."/>
            <person name="Ivanova N."/>
            <person name="Goker M."/>
            <person name="Klenk H.P."/>
            <person name="Csonka L.N."/>
            <person name="Woyke T."/>
        </authorList>
    </citation>
    <scope>NUCLEOTIDE SEQUENCE [LARGE SCALE GENOMIC DNA]</scope>
    <source>
        <strain>ATCC BAA-138 / DSM 3043 / CIP 106854 / NCIMB 13768 / 1H11</strain>
    </source>
</reference>
<protein>
    <recommendedName>
        <fullName evidence="1">Probable alpha-L-glutamate ligase</fullName>
        <ecNumber evidence="1">6.3.2.-</ecNumber>
    </recommendedName>
</protein>
<organism>
    <name type="scientific">Chromohalobacter salexigens (strain ATCC BAA-138 / DSM 3043 / CIP 106854 / NCIMB 13768 / 1H11)</name>
    <dbReference type="NCBI Taxonomy" id="290398"/>
    <lineage>
        <taxon>Bacteria</taxon>
        <taxon>Pseudomonadati</taxon>
        <taxon>Pseudomonadota</taxon>
        <taxon>Gammaproteobacteria</taxon>
        <taxon>Oceanospirillales</taxon>
        <taxon>Halomonadaceae</taxon>
        <taxon>Chromohalobacter</taxon>
    </lineage>
</organism>
<accession>Q1QY63</accession>
<dbReference type="EC" id="6.3.2.-" evidence="1"/>
<dbReference type="EMBL" id="CP000285">
    <property type="protein sequence ID" value="ABE58595.1"/>
    <property type="molecule type" value="Genomic_DNA"/>
</dbReference>
<dbReference type="RefSeq" id="WP_011506541.1">
    <property type="nucleotide sequence ID" value="NC_007963.1"/>
</dbReference>
<dbReference type="SMR" id="Q1QY63"/>
<dbReference type="STRING" id="290398.Csal_1240"/>
<dbReference type="GeneID" id="95333981"/>
<dbReference type="KEGG" id="csa:Csal_1240"/>
<dbReference type="eggNOG" id="COG0189">
    <property type="taxonomic scope" value="Bacteria"/>
</dbReference>
<dbReference type="HOGENOM" id="CLU_054353_0_1_6"/>
<dbReference type="OrthoDB" id="3865600at2"/>
<dbReference type="Proteomes" id="UP000000239">
    <property type="component" value="Chromosome"/>
</dbReference>
<dbReference type="GO" id="GO:0005737">
    <property type="term" value="C:cytoplasm"/>
    <property type="evidence" value="ECO:0007669"/>
    <property type="project" value="TreeGrafter"/>
</dbReference>
<dbReference type="GO" id="GO:0005524">
    <property type="term" value="F:ATP binding"/>
    <property type="evidence" value="ECO:0007669"/>
    <property type="project" value="UniProtKB-UniRule"/>
</dbReference>
<dbReference type="GO" id="GO:0046872">
    <property type="term" value="F:metal ion binding"/>
    <property type="evidence" value="ECO:0007669"/>
    <property type="project" value="UniProtKB-KW"/>
</dbReference>
<dbReference type="GO" id="GO:0018169">
    <property type="term" value="F:ribosomal S6-glutamic acid ligase activity"/>
    <property type="evidence" value="ECO:0007669"/>
    <property type="project" value="TreeGrafter"/>
</dbReference>
<dbReference type="GO" id="GO:0036211">
    <property type="term" value="P:protein modification process"/>
    <property type="evidence" value="ECO:0007669"/>
    <property type="project" value="InterPro"/>
</dbReference>
<dbReference type="GO" id="GO:0009432">
    <property type="term" value="P:SOS response"/>
    <property type="evidence" value="ECO:0007669"/>
    <property type="project" value="TreeGrafter"/>
</dbReference>
<dbReference type="GO" id="GO:0006412">
    <property type="term" value="P:translation"/>
    <property type="evidence" value="ECO:0007669"/>
    <property type="project" value="UniProtKB-KW"/>
</dbReference>
<dbReference type="FunFam" id="3.40.50.20:FF:000004">
    <property type="entry name" value="Probable alpha-L-glutamate ligase"/>
    <property type="match status" value="1"/>
</dbReference>
<dbReference type="FunFam" id="3.30.1490.20:FF:000005">
    <property type="entry name" value="Probable alpha-L-glutamate ligase 1"/>
    <property type="match status" value="1"/>
</dbReference>
<dbReference type="FunFam" id="3.30.470.20:FF:000016">
    <property type="entry name" value="Ribosomal protein S6--L-glutamate ligase"/>
    <property type="match status" value="1"/>
</dbReference>
<dbReference type="Gene3D" id="3.40.50.20">
    <property type="match status" value="1"/>
</dbReference>
<dbReference type="Gene3D" id="3.30.1490.20">
    <property type="entry name" value="ATP-grasp fold, A domain"/>
    <property type="match status" value="1"/>
</dbReference>
<dbReference type="Gene3D" id="3.30.470.20">
    <property type="entry name" value="ATP-grasp fold, B domain"/>
    <property type="match status" value="1"/>
</dbReference>
<dbReference type="HAMAP" id="MF_01552">
    <property type="entry name" value="RimK"/>
    <property type="match status" value="1"/>
</dbReference>
<dbReference type="InterPro" id="IPR011761">
    <property type="entry name" value="ATP-grasp"/>
</dbReference>
<dbReference type="InterPro" id="IPR013651">
    <property type="entry name" value="ATP-grasp_RimK-type"/>
</dbReference>
<dbReference type="InterPro" id="IPR013815">
    <property type="entry name" value="ATP_grasp_subdomain_1"/>
</dbReference>
<dbReference type="InterPro" id="IPR023533">
    <property type="entry name" value="RimK"/>
</dbReference>
<dbReference type="InterPro" id="IPR041107">
    <property type="entry name" value="Rimk_N"/>
</dbReference>
<dbReference type="InterPro" id="IPR004666">
    <property type="entry name" value="Rp_bS6_RimK/Lys_biosynth_LsyX"/>
</dbReference>
<dbReference type="NCBIfam" id="NF007764">
    <property type="entry name" value="PRK10446.1"/>
    <property type="match status" value="1"/>
</dbReference>
<dbReference type="NCBIfam" id="TIGR00768">
    <property type="entry name" value="rimK_fam"/>
    <property type="match status" value="1"/>
</dbReference>
<dbReference type="PANTHER" id="PTHR21621:SF7">
    <property type="entry name" value="RIBOSOMAL PROTEIN BS6--L-GLUTAMATE LIGASE"/>
    <property type="match status" value="1"/>
</dbReference>
<dbReference type="PANTHER" id="PTHR21621">
    <property type="entry name" value="RIBOSOMAL PROTEIN S6 MODIFICATION PROTEIN"/>
    <property type="match status" value="1"/>
</dbReference>
<dbReference type="Pfam" id="PF08443">
    <property type="entry name" value="RimK"/>
    <property type="match status" value="1"/>
</dbReference>
<dbReference type="Pfam" id="PF18030">
    <property type="entry name" value="Rimk_N"/>
    <property type="match status" value="1"/>
</dbReference>
<dbReference type="SUPFAM" id="SSF56059">
    <property type="entry name" value="Glutathione synthetase ATP-binding domain-like"/>
    <property type="match status" value="1"/>
</dbReference>
<dbReference type="PROSITE" id="PS50975">
    <property type="entry name" value="ATP_GRASP"/>
    <property type="match status" value="1"/>
</dbReference>
<keyword id="KW-0067">ATP-binding</keyword>
<keyword id="KW-0436">Ligase</keyword>
<keyword id="KW-0460">Magnesium</keyword>
<keyword id="KW-0464">Manganese</keyword>
<keyword id="KW-0479">Metal-binding</keyword>
<keyword id="KW-0547">Nucleotide-binding</keyword>
<keyword id="KW-0648">Protein biosynthesis</keyword>
<keyword id="KW-1185">Reference proteome</keyword>
<sequence length="302" mass="32841">MHIGILSRNRRLYSTRRLVEAAEARGHTARVVDTLRCYMNIASHRPSIHYKGEEIEPFDAIVPRIGASVTFYGCAVLRQFEMMSTYVLNDSVSITRSRDKLRSLQLLSRKGLGLPVTGFAHSPDDIPDLITMVKGAPLVIKLLEGTQGIGVVLAETNQAAESVIQAFMGMKANIMVQEYIKEAKGADVRCLVIGDKVVAAMKRQAAEGEFRSNLHRGGTASVIRITPEERSTAIRAAKAMGLRIAGVDLLRSNHGPVIMEVNSSPGLQGIETATGKDIAGQIIEYIEKNASTPRKAPPKPKG</sequence>
<comment type="cofactor">
    <cofactor evidence="1">
        <name>Mg(2+)</name>
        <dbReference type="ChEBI" id="CHEBI:18420"/>
    </cofactor>
    <cofactor evidence="1">
        <name>Mn(2+)</name>
        <dbReference type="ChEBI" id="CHEBI:29035"/>
    </cofactor>
    <text evidence="1">Binds 2 magnesium or manganese ions per subunit.</text>
</comment>
<comment type="similarity">
    <text evidence="1">Belongs to the RimK family.</text>
</comment>
<proteinExistence type="inferred from homology"/>
<feature type="chain" id="PRO_1000068833" description="Probable alpha-L-glutamate ligase">
    <location>
        <begin position="1"/>
        <end position="302"/>
    </location>
</feature>
<feature type="domain" description="ATP-grasp" evidence="1">
    <location>
        <begin position="104"/>
        <end position="287"/>
    </location>
</feature>
<feature type="binding site" evidence="1">
    <location>
        <position position="141"/>
    </location>
    <ligand>
        <name>ATP</name>
        <dbReference type="ChEBI" id="CHEBI:30616"/>
    </ligand>
</feature>
<feature type="binding site" evidence="1">
    <location>
        <begin position="178"/>
        <end position="179"/>
    </location>
    <ligand>
        <name>ATP</name>
        <dbReference type="ChEBI" id="CHEBI:30616"/>
    </ligand>
</feature>
<feature type="binding site" evidence="1">
    <location>
        <position position="187"/>
    </location>
    <ligand>
        <name>ATP</name>
        <dbReference type="ChEBI" id="CHEBI:30616"/>
    </ligand>
</feature>
<feature type="binding site" evidence="1">
    <location>
        <begin position="211"/>
        <end position="213"/>
    </location>
    <ligand>
        <name>ATP</name>
        <dbReference type="ChEBI" id="CHEBI:30616"/>
    </ligand>
</feature>
<feature type="binding site" evidence="1">
    <location>
        <position position="248"/>
    </location>
    <ligand>
        <name>Mg(2+)</name>
        <dbReference type="ChEBI" id="CHEBI:18420"/>
        <label>1</label>
    </ligand>
</feature>
<feature type="binding site" evidence="1">
    <location>
        <position position="248"/>
    </location>
    <ligand>
        <name>Mn(2+)</name>
        <dbReference type="ChEBI" id="CHEBI:29035"/>
        <label>1</label>
    </ligand>
</feature>
<feature type="binding site" evidence="1">
    <location>
        <position position="260"/>
    </location>
    <ligand>
        <name>Mg(2+)</name>
        <dbReference type="ChEBI" id="CHEBI:18420"/>
        <label>1</label>
    </ligand>
</feature>
<feature type="binding site" evidence="1">
    <location>
        <position position="260"/>
    </location>
    <ligand>
        <name>Mg(2+)</name>
        <dbReference type="ChEBI" id="CHEBI:18420"/>
        <label>2</label>
    </ligand>
</feature>
<feature type="binding site" evidence="1">
    <location>
        <position position="260"/>
    </location>
    <ligand>
        <name>Mn(2+)</name>
        <dbReference type="ChEBI" id="CHEBI:29035"/>
        <label>1</label>
    </ligand>
</feature>
<feature type="binding site" evidence="1">
    <location>
        <position position="260"/>
    </location>
    <ligand>
        <name>Mn(2+)</name>
        <dbReference type="ChEBI" id="CHEBI:29035"/>
        <label>2</label>
    </ligand>
</feature>
<feature type="binding site" evidence="1">
    <location>
        <position position="262"/>
    </location>
    <ligand>
        <name>Mg(2+)</name>
        <dbReference type="ChEBI" id="CHEBI:18420"/>
        <label>2</label>
    </ligand>
</feature>
<feature type="binding site" evidence="1">
    <location>
        <position position="262"/>
    </location>
    <ligand>
        <name>Mn(2+)</name>
        <dbReference type="ChEBI" id="CHEBI:29035"/>
        <label>2</label>
    </ligand>
</feature>
<evidence type="ECO:0000255" key="1">
    <source>
        <dbReference type="HAMAP-Rule" id="MF_01552"/>
    </source>
</evidence>